<keyword id="KW-0028">Amino-acid biosynthesis</keyword>
<keyword id="KW-0057">Aromatic amino acid biosynthesis</keyword>
<keyword id="KW-0210">Decarboxylase</keyword>
<keyword id="KW-0456">Lyase</keyword>
<keyword id="KW-0822">Tryptophan biosynthesis</keyword>
<proteinExistence type="inferred from homology"/>
<evidence type="ECO:0000255" key="1">
    <source>
        <dbReference type="HAMAP-Rule" id="MF_00134"/>
    </source>
</evidence>
<dbReference type="EC" id="4.1.1.48" evidence="1"/>
<dbReference type="EMBL" id="FM211192">
    <property type="protein sequence ID" value="CAR71366.1"/>
    <property type="molecule type" value="Genomic_DNA"/>
</dbReference>
<dbReference type="SMR" id="B8ZRB9"/>
<dbReference type="KEGG" id="mlb:MLBr01271"/>
<dbReference type="HOGENOM" id="CLU_034247_0_0_11"/>
<dbReference type="UniPathway" id="UPA00035">
    <property type="reaction ID" value="UER00043"/>
</dbReference>
<dbReference type="Proteomes" id="UP000006900">
    <property type="component" value="Chromosome"/>
</dbReference>
<dbReference type="GO" id="GO:0004425">
    <property type="term" value="F:indole-3-glycerol-phosphate synthase activity"/>
    <property type="evidence" value="ECO:0007669"/>
    <property type="project" value="UniProtKB-UniRule"/>
</dbReference>
<dbReference type="GO" id="GO:0004640">
    <property type="term" value="F:phosphoribosylanthranilate isomerase activity"/>
    <property type="evidence" value="ECO:0007669"/>
    <property type="project" value="TreeGrafter"/>
</dbReference>
<dbReference type="GO" id="GO:0000162">
    <property type="term" value="P:L-tryptophan biosynthetic process"/>
    <property type="evidence" value="ECO:0007669"/>
    <property type="project" value="UniProtKB-UniRule"/>
</dbReference>
<dbReference type="CDD" id="cd00331">
    <property type="entry name" value="IGPS"/>
    <property type="match status" value="1"/>
</dbReference>
<dbReference type="FunFam" id="3.20.20.70:FF:000024">
    <property type="entry name" value="Indole-3-glycerol phosphate synthase"/>
    <property type="match status" value="1"/>
</dbReference>
<dbReference type="Gene3D" id="3.20.20.70">
    <property type="entry name" value="Aldolase class I"/>
    <property type="match status" value="1"/>
</dbReference>
<dbReference type="HAMAP" id="MF_00134_B">
    <property type="entry name" value="IGPS_B"/>
    <property type="match status" value="1"/>
</dbReference>
<dbReference type="InterPro" id="IPR013785">
    <property type="entry name" value="Aldolase_TIM"/>
</dbReference>
<dbReference type="InterPro" id="IPR045186">
    <property type="entry name" value="Indole-3-glycerol_P_synth"/>
</dbReference>
<dbReference type="InterPro" id="IPR013798">
    <property type="entry name" value="Indole-3-glycerol_P_synth_dom"/>
</dbReference>
<dbReference type="InterPro" id="IPR001468">
    <property type="entry name" value="Indole-3-GlycerolPSynthase_CS"/>
</dbReference>
<dbReference type="InterPro" id="IPR011060">
    <property type="entry name" value="RibuloseP-bd_barrel"/>
</dbReference>
<dbReference type="NCBIfam" id="NF001369">
    <property type="entry name" value="PRK00278.1-1"/>
    <property type="match status" value="1"/>
</dbReference>
<dbReference type="NCBIfam" id="NF001377">
    <property type="entry name" value="PRK00278.2-4"/>
    <property type="match status" value="1"/>
</dbReference>
<dbReference type="PANTHER" id="PTHR22854:SF2">
    <property type="entry name" value="INDOLE-3-GLYCEROL-PHOSPHATE SYNTHASE"/>
    <property type="match status" value="1"/>
</dbReference>
<dbReference type="PANTHER" id="PTHR22854">
    <property type="entry name" value="TRYPTOPHAN BIOSYNTHESIS PROTEIN"/>
    <property type="match status" value="1"/>
</dbReference>
<dbReference type="Pfam" id="PF00218">
    <property type="entry name" value="IGPS"/>
    <property type="match status" value="1"/>
</dbReference>
<dbReference type="SUPFAM" id="SSF51366">
    <property type="entry name" value="Ribulose-phoshate binding barrel"/>
    <property type="match status" value="1"/>
</dbReference>
<dbReference type="PROSITE" id="PS00614">
    <property type="entry name" value="IGPS"/>
    <property type="match status" value="1"/>
</dbReference>
<reference key="1">
    <citation type="journal article" date="2009" name="Nat. Genet.">
        <title>Comparative genomic and phylogeographic analysis of Mycobacterium leprae.</title>
        <authorList>
            <person name="Monot M."/>
            <person name="Honore N."/>
            <person name="Garnier T."/>
            <person name="Zidane N."/>
            <person name="Sherafi D."/>
            <person name="Paniz-Mondolfi A."/>
            <person name="Matsuoka M."/>
            <person name="Taylor G.M."/>
            <person name="Donoghue H.D."/>
            <person name="Bouwman A."/>
            <person name="Mays S."/>
            <person name="Watson C."/>
            <person name="Lockwood D."/>
            <person name="Khamispour A."/>
            <person name="Dowlati Y."/>
            <person name="Jianping S."/>
            <person name="Rea T.H."/>
            <person name="Vera-Cabrera L."/>
            <person name="Stefani M.M."/>
            <person name="Banu S."/>
            <person name="Macdonald M."/>
            <person name="Sapkota B.R."/>
            <person name="Spencer J.S."/>
            <person name="Thomas J."/>
            <person name="Harshman K."/>
            <person name="Singh P."/>
            <person name="Busso P."/>
            <person name="Gattiker A."/>
            <person name="Rougemont J."/>
            <person name="Brennan P.J."/>
            <person name="Cole S.T."/>
        </authorList>
    </citation>
    <scope>NUCLEOTIDE SEQUENCE [LARGE SCALE GENOMIC DNA]</scope>
    <source>
        <strain>Br4923</strain>
    </source>
</reference>
<accession>B8ZRB9</accession>
<name>TRPC_MYCLB</name>
<gene>
    <name evidence="1" type="primary">trpC</name>
    <name type="ordered locus">MLBr01271</name>
</gene>
<comment type="catalytic activity">
    <reaction evidence="1">
        <text>1-(2-carboxyphenylamino)-1-deoxy-D-ribulose 5-phosphate + H(+) = (1S,2R)-1-C-(indol-3-yl)glycerol 3-phosphate + CO2 + H2O</text>
        <dbReference type="Rhea" id="RHEA:23476"/>
        <dbReference type="ChEBI" id="CHEBI:15377"/>
        <dbReference type="ChEBI" id="CHEBI:15378"/>
        <dbReference type="ChEBI" id="CHEBI:16526"/>
        <dbReference type="ChEBI" id="CHEBI:58613"/>
        <dbReference type="ChEBI" id="CHEBI:58866"/>
        <dbReference type="EC" id="4.1.1.48"/>
    </reaction>
</comment>
<comment type="pathway">
    <text evidence="1">Amino-acid biosynthesis; L-tryptophan biosynthesis; L-tryptophan from chorismate: step 4/5.</text>
</comment>
<comment type="similarity">
    <text evidence="1">Belongs to the TrpC family.</text>
</comment>
<sequence>MCPATVLDSILKGVRADVAAREACISLSEIKAAAAAAPAPLDAMAALREPGIGVIAEVKRASPSVGSLATIADPAKLAQAYEDGGARIISVLTEERRFNGSLDDLDAVRAAVSVPVLRKDFVVQPYQIHEARAHGADMLLLIVAALDQSALMSMLDRTESLGMIALVEVRTEQEADRALKAGAKVIGVNARDLMTLEVDRDCFSRIAPGLPSNVIRIAESGVRGPADLLAYAGAGADAVLVGEGLVKSGDPRAAVADLVTAGTHPSCPKPAR</sequence>
<organism>
    <name type="scientific">Mycobacterium leprae (strain Br4923)</name>
    <dbReference type="NCBI Taxonomy" id="561304"/>
    <lineage>
        <taxon>Bacteria</taxon>
        <taxon>Bacillati</taxon>
        <taxon>Actinomycetota</taxon>
        <taxon>Actinomycetes</taxon>
        <taxon>Mycobacteriales</taxon>
        <taxon>Mycobacteriaceae</taxon>
        <taxon>Mycobacterium</taxon>
    </lineage>
</organism>
<feature type="chain" id="PRO_1000198780" description="Indole-3-glycerol phosphate synthase">
    <location>
        <begin position="1"/>
        <end position="272"/>
    </location>
</feature>
<protein>
    <recommendedName>
        <fullName evidence="1">Indole-3-glycerol phosphate synthase</fullName>
        <shortName evidence="1">IGPS</shortName>
        <ecNumber evidence="1">4.1.1.48</ecNumber>
    </recommendedName>
</protein>